<gene>
    <name evidence="7" type="primary">Fhip1b</name>
    <name evidence="7" type="synonym">Fam160a2</name>
    <name type="synonym">Kiaa1759</name>
</gene>
<dbReference type="EMBL" id="AK122552">
    <property type="protein sequence ID" value="BAC65834.2"/>
    <property type="status" value="ALT_INIT"/>
    <property type="molecule type" value="Transcribed_RNA"/>
</dbReference>
<dbReference type="EMBL" id="AK014591">
    <property type="protein sequence ID" value="BAC25444.1"/>
    <property type="molecule type" value="mRNA"/>
</dbReference>
<dbReference type="EMBL" id="AK155273">
    <property type="protein sequence ID" value="BAE33157.1"/>
    <property type="molecule type" value="mRNA"/>
</dbReference>
<dbReference type="EMBL" id="AK159716">
    <property type="protein sequence ID" value="BAE35311.1"/>
    <property type="molecule type" value="mRNA"/>
</dbReference>
<dbReference type="EMBL" id="BC019738">
    <property type="protein sequence ID" value="AAH19738.1"/>
    <property type="molecule type" value="mRNA"/>
</dbReference>
<dbReference type="EMBL" id="BC043717">
    <property type="protein sequence ID" value="AAH43717.1"/>
    <property type="molecule type" value="mRNA"/>
</dbReference>
<dbReference type="EMBL" id="BC063093">
    <property type="protein sequence ID" value="AAH63093.1"/>
    <property type="molecule type" value="mRNA"/>
</dbReference>
<dbReference type="CCDS" id="CCDS21649.1">
    <molecule id="Q3U2I3-1"/>
</dbReference>
<dbReference type="CCDS" id="CCDS57575.1">
    <molecule id="Q3U2I3-3"/>
</dbReference>
<dbReference type="RefSeq" id="NP_001229292.1">
    <molecule id="Q3U2I3-1"/>
    <property type="nucleotide sequence ID" value="NM_001242363.2"/>
</dbReference>
<dbReference type="RefSeq" id="NP_001229293.1">
    <property type="nucleotide sequence ID" value="NM_001242364.2"/>
</dbReference>
<dbReference type="RefSeq" id="NP_001229294.1">
    <molecule id="Q3U2I3-3"/>
    <property type="nucleotide sequence ID" value="NM_001242365.2"/>
</dbReference>
<dbReference type="RefSeq" id="NP_950174.1">
    <molecule id="Q3U2I3-1"/>
    <property type="nucleotide sequence ID" value="NM_199009.3"/>
</dbReference>
<dbReference type="RefSeq" id="XP_036009393.1">
    <molecule id="Q3U2I3-1"/>
    <property type="nucleotide sequence ID" value="XM_036153500.1"/>
</dbReference>
<dbReference type="SMR" id="Q3U2I3"/>
<dbReference type="BioGRID" id="216681">
    <property type="interactions" value="2"/>
</dbReference>
<dbReference type="FunCoup" id="Q3U2I3">
    <property type="interactions" value="791"/>
</dbReference>
<dbReference type="STRING" id="10090.ENSMUSP00000045084"/>
<dbReference type="GlyGen" id="Q3U2I3">
    <property type="glycosylation" value="3 sites"/>
</dbReference>
<dbReference type="iPTMnet" id="Q3U2I3"/>
<dbReference type="PhosphoSitePlus" id="Q3U2I3"/>
<dbReference type="jPOST" id="Q3U2I3"/>
<dbReference type="PaxDb" id="10090-ENSMUSP00000112711"/>
<dbReference type="ProteomicsDB" id="275506">
    <molecule id="Q3U2I3-1"/>
</dbReference>
<dbReference type="ProteomicsDB" id="275507">
    <molecule id="Q3U2I3-2"/>
</dbReference>
<dbReference type="ProteomicsDB" id="275508">
    <molecule id="Q3U2I3-3"/>
</dbReference>
<dbReference type="Pumba" id="Q3U2I3"/>
<dbReference type="Antibodypedia" id="67203">
    <property type="antibodies" value="45 antibodies from 12 providers"/>
</dbReference>
<dbReference type="DNASU" id="74349"/>
<dbReference type="Ensembl" id="ENSMUST00000118726.8">
    <molecule id="Q3U2I3-3"/>
    <property type="protein sequence ID" value="ENSMUSP00000112605.2"/>
    <property type="gene ID" value="ENSMUSG00000044465.20"/>
</dbReference>
<dbReference type="Ensembl" id="ENSMUST00000122327.7">
    <molecule id="Q3U2I3-1"/>
    <property type="protein sequence ID" value="ENSMUSP00000112711.2"/>
    <property type="gene ID" value="ENSMUSG00000044465.20"/>
</dbReference>
<dbReference type="Ensembl" id="ENSMUST00000179474.9">
    <molecule id="Q3U2I3-1"/>
    <property type="protein sequence ID" value="ENSMUSP00000137163.3"/>
    <property type="gene ID" value="ENSMUSG00000044465.20"/>
</dbReference>
<dbReference type="GeneID" id="74349"/>
<dbReference type="KEGG" id="mmu:74349"/>
<dbReference type="UCSC" id="uc009ixy.2">
    <molecule id="Q3U2I3-1"/>
    <property type="organism name" value="mouse"/>
</dbReference>
<dbReference type="UCSC" id="uc012frl.2">
    <molecule id="Q3U2I3-3"/>
    <property type="organism name" value="mouse"/>
</dbReference>
<dbReference type="AGR" id="MGI:1921599"/>
<dbReference type="CTD" id="84067"/>
<dbReference type="MGI" id="MGI:1921599">
    <property type="gene designation" value="Fhip1b"/>
</dbReference>
<dbReference type="VEuPathDB" id="HostDB:ENSMUSG00000044465"/>
<dbReference type="eggNOG" id="KOG3695">
    <property type="taxonomic scope" value="Eukaryota"/>
</dbReference>
<dbReference type="GeneTree" id="ENSGT00950000182936"/>
<dbReference type="HOGENOM" id="CLU_007807_1_0_1"/>
<dbReference type="InParanoid" id="Q3U2I3"/>
<dbReference type="OMA" id="QQTHTEC"/>
<dbReference type="OrthoDB" id="6287422at2759"/>
<dbReference type="PhylomeDB" id="Q3U2I3"/>
<dbReference type="TreeFam" id="TF313941"/>
<dbReference type="BioGRID-ORCS" id="74349">
    <property type="hits" value="0 hits in 77 CRISPR screens"/>
</dbReference>
<dbReference type="ChiTaRS" id="Fam160a2">
    <property type="organism name" value="mouse"/>
</dbReference>
<dbReference type="PRO" id="PR:Q3U2I3"/>
<dbReference type="Proteomes" id="UP000000589">
    <property type="component" value="Chromosome 7"/>
</dbReference>
<dbReference type="RNAct" id="Q3U2I3">
    <property type="molecule type" value="protein"/>
</dbReference>
<dbReference type="Bgee" id="ENSMUSG00000044465">
    <property type="expression patterns" value="Expressed in granulocyte and 248 other cell types or tissues"/>
</dbReference>
<dbReference type="ExpressionAtlas" id="Q3U2I3">
    <property type="expression patterns" value="baseline and differential"/>
</dbReference>
<dbReference type="GO" id="GO:0070695">
    <property type="term" value="C:FHF complex"/>
    <property type="evidence" value="ECO:0000250"/>
    <property type="project" value="UniProtKB"/>
</dbReference>
<dbReference type="GO" id="GO:0045022">
    <property type="term" value="P:early endosome to late endosome transport"/>
    <property type="evidence" value="ECO:0000250"/>
    <property type="project" value="UniProtKB"/>
</dbReference>
<dbReference type="GO" id="GO:0007032">
    <property type="term" value="P:endosome organization"/>
    <property type="evidence" value="ECO:0000250"/>
    <property type="project" value="UniProtKB"/>
</dbReference>
<dbReference type="GO" id="GO:0008333">
    <property type="term" value="P:endosome to lysosome transport"/>
    <property type="evidence" value="ECO:0000250"/>
    <property type="project" value="UniProtKB"/>
</dbReference>
<dbReference type="GO" id="GO:0007040">
    <property type="term" value="P:lysosome organization"/>
    <property type="evidence" value="ECO:0000250"/>
    <property type="project" value="UniProtKB"/>
</dbReference>
<dbReference type="GO" id="GO:1905719">
    <property type="term" value="P:protein localization to perinuclear region of cytoplasm"/>
    <property type="evidence" value="ECO:0000250"/>
    <property type="project" value="UniProtKB"/>
</dbReference>
<dbReference type="GO" id="GO:0015031">
    <property type="term" value="P:protein transport"/>
    <property type="evidence" value="ECO:0007669"/>
    <property type="project" value="UniProtKB-KW"/>
</dbReference>
<dbReference type="InterPro" id="IPR019384">
    <property type="entry name" value="FHIP"/>
</dbReference>
<dbReference type="InterPro" id="IPR045669">
    <property type="entry name" value="FHIP_C"/>
</dbReference>
<dbReference type="InterPro" id="IPR045668">
    <property type="entry name" value="FHIP_KELAA_motif"/>
</dbReference>
<dbReference type="PANTHER" id="PTHR21705:SF4">
    <property type="entry name" value="FHF COMPLEX SUBUNIT HOOK-INTERACTING PROTEIN 1B"/>
    <property type="match status" value="1"/>
</dbReference>
<dbReference type="PANTHER" id="PTHR21705">
    <property type="entry name" value="RAI16 PROTEIN-RELATED"/>
    <property type="match status" value="1"/>
</dbReference>
<dbReference type="Pfam" id="PF19314">
    <property type="entry name" value="DUF5917"/>
    <property type="match status" value="1"/>
</dbReference>
<dbReference type="Pfam" id="PF19311">
    <property type="entry name" value="KELAA"/>
    <property type="match status" value="1"/>
</dbReference>
<dbReference type="Pfam" id="PF10257">
    <property type="entry name" value="RAI16-like"/>
    <property type="match status" value="1"/>
</dbReference>
<organism>
    <name type="scientific">Mus musculus</name>
    <name type="common">Mouse</name>
    <dbReference type="NCBI Taxonomy" id="10090"/>
    <lineage>
        <taxon>Eukaryota</taxon>
        <taxon>Metazoa</taxon>
        <taxon>Chordata</taxon>
        <taxon>Craniata</taxon>
        <taxon>Vertebrata</taxon>
        <taxon>Euteleostomi</taxon>
        <taxon>Mammalia</taxon>
        <taxon>Eutheria</taxon>
        <taxon>Euarchontoglires</taxon>
        <taxon>Glires</taxon>
        <taxon>Rodentia</taxon>
        <taxon>Myomorpha</taxon>
        <taxon>Muroidea</taxon>
        <taxon>Muridae</taxon>
        <taxon>Murinae</taxon>
        <taxon>Mus</taxon>
        <taxon>Mus</taxon>
    </lineage>
</organism>
<keyword id="KW-0025">Alternative splicing</keyword>
<keyword id="KW-0597">Phosphoprotein</keyword>
<keyword id="KW-0653">Protein transport</keyword>
<keyword id="KW-1185">Reference proteome</keyword>
<keyword id="KW-0813">Transport</keyword>
<sequence length="975" mass="106541">MEKMNWLSRLASRVPGHRVPQGASLQTPVMADPETCLMVFKNHWSQVVRILERQGPRAATGGADDLSAVRNHTYQMLTLLAEDRAVPSAPSGPGPLLEFALREDLLSRVLTWQLQWDEFGDGVEERRAEQLKLFEMLVSEARQPLLRHGPVREALLALLDACGRPVPSSPALDEGLVLLLSQLCVCVAREPSLLEFFLQPPPEPGAAPRLLLFSRLVPFVHREGTLGQQARDALLLLMALSDGSPTVGRYIADHSYFCPVLATGLSALYSSLPRKIEVPGDDWHCLRREDWIGVPALALFMSSLEFCNAVIQVAHPLVQKQLVDYIHNGFLVPVMGPALHKTSVEEMIASTAYLELFLRSISEPALLRTFLRFLLLHRHDTHTILDTLVARIGSNSRLCMVSLSLFRTLLNLSCEDVLLQLVLRYLVPCNHVMLSQKPAVRDVDLYGRAADKFLSLIPRCCRHHAPSPPRPEHASWARGPGSPSVDSSSVVTVPRPSTPSRLALFLRQQSLGGSESPGPVPRSPGLTASPTSSPSRRPSPAEEPGELEDNYLEYLREARRGVDRCVRACRTWSAPYDGERPPPEPNPLGSRTKKRSLLPEEDRDNVREGEEENLGSRGLAVGVGDTPGYLLPPQLNGVPGPWPEGAKKVRLVPRLVPQEGVRELLEGTSEDMAGLESFGQELQELEVALSNGGAGSEPPLEPPLPPEEEEAYESFTCPPEPPGPFLSSPLRTLHQLPSQPFTGPFMAVLFAKLENMLQNSVYVNFLLTGLVAQLACHPQPLLRSFLLNTNMVFQPSVKSLLQVLGSVKNKIESFAASQEDFPALLSKAKKYLIARGKLDWAEGPTAGPAPRRSDSLVRSRRPSLGELLLRHAHSPTRARQAVQVLQPGRDGTGLGLGGGSPGASTPVLLPRGGASERQGEALRVKNAVYCAVIFPEFLKELAAISQAHAVTSPFLLDTSEEVSLPPISGFGPLNP</sequence>
<reference key="1">
    <citation type="journal article" date="2003" name="DNA Res.">
        <title>Prediction of the coding sequences of mouse homologues of KIAA gene: II. The complete nucleotide sequences of 400 mouse KIAA-homologous cDNAs identified by screening of terminal sequences of cDNA clones randomly sampled from size-fractionated libraries.</title>
        <authorList>
            <person name="Okazaki N."/>
            <person name="Kikuno R."/>
            <person name="Ohara R."/>
            <person name="Inamoto S."/>
            <person name="Aizawa H."/>
            <person name="Yuasa S."/>
            <person name="Nakajima D."/>
            <person name="Nagase T."/>
            <person name="Ohara O."/>
            <person name="Koga H."/>
        </authorList>
    </citation>
    <scope>NUCLEOTIDE SEQUENCE [LARGE SCALE MRNA] (ISOFORM 2)</scope>
    <source>
        <tissue>Brain</tissue>
    </source>
</reference>
<reference key="2">
    <citation type="journal article" date="2005" name="Science">
        <title>The transcriptional landscape of the mammalian genome.</title>
        <authorList>
            <person name="Carninci P."/>
            <person name="Kasukawa T."/>
            <person name="Katayama S."/>
            <person name="Gough J."/>
            <person name="Frith M.C."/>
            <person name="Maeda N."/>
            <person name="Oyama R."/>
            <person name="Ravasi T."/>
            <person name="Lenhard B."/>
            <person name="Wells C."/>
            <person name="Kodzius R."/>
            <person name="Shimokawa K."/>
            <person name="Bajic V.B."/>
            <person name="Brenner S.E."/>
            <person name="Batalov S."/>
            <person name="Forrest A.R."/>
            <person name="Zavolan M."/>
            <person name="Davis M.J."/>
            <person name="Wilming L.G."/>
            <person name="Aidinis V."/>
            <person name="Allen J.E."/>
            <person name="Ambesi-Impiombato A."/>
            <person name="Apweiler R."/>
            <person name="Aturaliya R.N."/>
            <person name="Bailey T.L."/>
            <person name="Bansal M."/>
            <person name="Baxter L."/>
            <person name="Beisel K.W."/>
            <person name="Bersano T."/>
            <person name="Bono H."/>
            <person name="Chalk A.M."/>
            <person name="Chiu K.P."/>
            <person name="Choudhary V."/>
            <person name="Christoffels A."/>
            <person name="Clutterbuck D.R."/>
            <person name="Crowe M.L."/>
            <person name="Dalla E."/>
            <person name="Dalrymple B.P."/>
            <person name="de Bono B."/>
            <person name="Della Gatta G."/>
            <person name="di Bernardo D."/>
            <person name="Down T."/>
            <person name="Engstrom P."/>
            <person name="Fagiolini M."/>
            <person name="Faulkner G."/>
            <person name="Fletcher C.F."/>
            <person name="Fukushima T."/>
            <person name="Furuno M."/>
            <person name="Futaki S."/>
            <person name="Gariboldi M."/>
            <person name="Georgii-Hemming P."/>
            <person name="Gingeras T.R."/>
            <person name="Gojobori T."/>
            <person name="Green R.E."/>
            <person name="Gustincich S."/>
            <person name="Harbers M."/>
            <person name="Hayashi Y."/>
            <person name="Hensch T.K."/>
            <person name="Hirokawa N."/>
            <person name="Hill D."/>
            <person name="Huminiecki L."/>
            <person name="Iacono M."/>
            <person name="Ikeo K."/>
            <person name="Iwama A."/>
            <person name="Ishikawa T."/>
            <person name="Jakt M."/>
            <person name="Kanapin A."/>
            <person name="Katoh M."/>
            <person name="Kawasawa Y."/>
            <person name="Kelso J."/>
            <person name="Kitamura H."/>
            <person name="Kitano H."/>
            <person name="Kollias G."/>
            <person name="Krishnan S.P."/>
            <person name="Kruger A."/>
            <person name="Kummerfeld S.K."/>
            <person name="Kurochkin I.V."/>
            <person name="Lareau L.F."/>
            <person name="Lazarevic D."/>
            <person name="Lipovich L."/>
            <person name="Liu J."/>
            <person name="Liuni S."/>
            <person name="McWilliam S."/>
            <person name="Madan Babu M."/>
            <person name="Madera M."/>
            <person name="Marchionni L."/>
            <person name="Matsuda H."/>
            <person name="Matsuzawa S."/>
            <person name="Miki H."/>
            <person name="Mignone F."/>
            <person name="Miyake S."/>
            <person name="Morris K."/>
            <person name="Mottagui-Tabar S."/>
            <person name="Mulder N."/>
            <person name="Nakano N."/>
            <person name="Nakauchi H."/>
            <person name="Ng P."/>
            <person name="Nilsson R."/>
            <person name="Nishiguchi S."/>
            <person name="Nishikawa S."/>
            <person name="Nori F."/>
            <person name="Ohara O."/>
            <person name="Okazaki Y."/>
            <person name="Orlando V."/>
            <person name="Pang K.C."/>
            <person name="Pavan W.J."/>
            <person name="Pavesi G."/>
            <person name="Pesole G."/>
            <person name="Petrovsky N."/>
            <person name="Piazza S."/>
            <person name="Reed J."/>
            <person name="Reid J.F."/>
            <person name="Ring B.Z."/>
            <person name="Ringwald M."/>
            <person name="Rost B."/>
            <person name="Ruan Y."/>
            <person name="Salzberg S.L."/>
            <person name="Sandelin A."/>
            <person name="Schneider C."/>
            <person name="Schoenbach C."/>
            <person name="Sekiguchi K."/>
            <person name="Semple C.A."/>
            <person name="Seno S."/>
            <person name="Sessa L."/>
            <person name="Sheng Y."/>
            <person name="Shibata Y."/>
            <person name="Shimada H."/>
            <person name="Shimada K."/>
            <person name="Silva D."/>
            <person name="Sinclair B."/>
            <person name="Sperling S."/>
            <person name="Stupka E."/>
            <person name="Sugiura K."/>
            <person name="Sultana R."/>
            <person name="Takenaka Y."/>
            <person name="Taki K."/>
            <person name="Tammoja K."/>
            <person name="Tan S.L."/>
            <person name="Tang S."/>
            <person name="Taylor M.S."/>
            <person name="Tegner J."/>
            <person name="Teichmann S.A."/>
            <person name="Ueda H.R."/>
            <person name="van Nimwegen E."/>
            <person name="Verardo R."/>
            <person name="Wei C.L."/>
            <person name="Yagi K."/>
            <person name="Yamanishi H."/>
            <person name="Zabarovsky E."/>
            <person name="Zhu S."/>
            <person name="Zimmer A."/>
            <person name="Hide W."/>
            <person name="Bult C."/>
            <person name="Grimmond S.M."/>
            <person name="Teasdale R.D."/>
            <person name="Liu E.T."/>
            <person name="Brusic V."/>
            <person name="Quackenbush J."/>
            <person name="Wahlestedt C."/>
            <person name="Mattick J.S."/>
            <person name="Hume D.A."/>
            <person name="Kai C."/>
            <person name="Sasaki D."/>
            <person name="Tomaru Y."/>
            <person name="Fukuda S."/>
            <person name="Kanamori-Katayama M."/>
            <person name="Suzuki M."/>
            <person name="Aoki J."/>
            <person name="Arakawa T."/>
            <person name="Iida J."/>
            <person name="Imamura K."/>
            <person name="Itoh M."/>
            <person name="Kato T."/>
            <person name="Kawaji H."/>
            <person name="Kawagashira N."/>
            <person name="Kawashima T."/>
            <person name="Kojima M."/>
            <person name="Kondo S."/>
            <person name="Konno H."/>
            <person name="Nakano K."/>
            <person name="Ninomiya N."/>
            <person name="Nishio T."/>
            <person name="Okada M."/>
            <person name="Plessy C."/>
            <person name="Shibata K."/>
            <person name="Shiraki T."/>
            <person name="Suzuki S."/>
            <person name="Tagami M."/>
            <person name="Waki K."/>
            <person name="Watahiki A."/>
            <person name="Okamura-Oho Y."/>
            <person name="Suzuki H."/>
            <person name="Kawai J."/>
            <person name="Hayashizaki Y."/>
        </authorList>
    </citation>
    <scope>NUCLEOTIDE SEQUENCE [LARGE SCALE MRNA] (ISOFORMS 1 AND 3)</scope>
    <source>
        <strain>C57BL/6J</strain>
        <strain>NOD</strain>
        <tissue>Skin</tissue>
    </source>
</reference>
<reference key="3">
    <citation type="journal article" date="2004" name="Genome Res.">
        <title>The status, quality, and expansion of the NIH full-length cDNA project: the Mammalian Gene Collection (MGC).</title>
        <authorList>
            <consortium name="The MGC Project Team"/>
        </authorList>
    </citation>
    <scope>NUCLEOTIDE SEQUENCE [LARGE SCALE MRNA] (ISOFORM 1)</scope>
    <source>
        <strain>Czech II</strain>
        <strain>FVB/N-3</strain>
        <tissue>Embryo</tissue>
        <tissue>Mammary gland</tissue>
    </source>
</reference>
<reference key="4">
    <citation type="journal article" date="2007" name="Proc. Natl. Acad. Sci. U.S.A.">
        <title>Large-scale phosphorylation analysis of mouse liver.</title>
        <authorList>
            <person name="Villen J."/>
            <person name="Beausoleil S.A."/>
            <person name="Gerber S.A."/>
            <person name="Gygi S.P."/>
        </authorList>
    </citation>
    <scope>PHOSPHORYLATION [LARGE SCALE ANALYSIS] AT SER-510 AND SER-523</scope>
    <scope>IDENTIFICATION BY MASS SPECTROMETRY [LARGE SCALE ANALYSIS]</scope>
    <source>
        <tissue>Liver</tissue>
    </source>
</reference>
<reference key="5">
    <citation type="journal article" date="2010" name="Cell">
        <title>A tissue-specific atlas of mouse protein phosphorylation and expression.</title>
        <authorList>
            <person name="Huttlin E.L."/>
            <person name="Jedrychowski M.P."/>
            <person name="Elias J.E."/>
            <person name="Goswami T."/>
            <person name="Rad R."/>
            <person name="Beausoleil S.A."/>
            <person name="Villen J."/>
            <person name="Haas W."/>
            <person name="Sowa M.E."/>
            <person name="Gygi S.P."/>
        </authorList>
    </citation>
    <scope>PHOSPHORYLATION [LARGE SCALE ANALYSIS] AT SER-510 AND SER-900</scope>
    <scope>IDENTIFICATION BY MASS SPECTROMETRY [LARGE SCALE ANALYSIS]</scope>
    <source>
        <tissue>Brain</tissue>
        <tissue>Heart</tissue>
        <tissue>Kidney</tissue>
        <tissue>Testis</tissue>
    </source>
</reference>
<protein>
    <recommendedName>
        <fullName evidence="7">FHF complex subunit HOOK-interacting protein 1B</fullName>
    </recommendedName>
    <alternativeName>
        <fullName evidence="2">FTS- and Hook-interacting protein</fullName>
        <shortName evidence="2">FHIP</shortName>
    </alternativeName>
</protein>
<proteinExistence type="evidence at protein level"/>
<evidence type="ECO:0000250" key="1">
    <source>
        <dbReference type="UniProtKB" id="Q66H54"/>
    </source>
</evidence>
<evidence type="ECO:0000250" key="2">
    <source>
        <dbReference type="UniProtKB" id="Q8N612"/>
    </source>
</evidence>
<evidence type="ECO:0000256" key="3">
    <source>
        <dbReference type="SAM" id="MobiDB-lite"/>
    </source>
</evidence>
<evidence type="ECO:0000303" key="4">
    <source>
    </source>
</evidence>
<evidence type="ECO:0000303" key="5">
    <source>
    </source>
</evidence>
<evidence type="ECO:0000305" key="6"/>
<evidence type="ECO:0000312" key="7">
    <source>
        <dbReference type="MGI" id="MGI:1921599"/>
    </source>
</evidence>
<evidence type="ECO:0007744" key="8">
    <source>
    </source>
</evidence>
<evidence type="ECO:0007744" key="9">
    <source>
    </source>
</evidence>
<feature type="chain" id="PRO_0000253860" description="FHF complex subunit HOOK-interacting protein 1B">
    <location>
        <begin position="1"/>
        <end position="975"/>
    </location>
</feature>
<feature type="region of interest" description="Disordered" evidence="3">
    <location>
        <begin position="465"/>
        <end position="496"/>
    </location>
</feature>
<feature type="region of interest" description="Disordered" evidence="3">
    <location>
        <begin position="511"/>
        <end position="548"/>
    </location>
</feature>
<feature type="region of interest" description="Disordered" evidence="3">
    <location>
        <begin position="573"/>
        <end position="621"/>
    </location>
</feature>
<feature type="region of interest" description="Disordered" evidence="3">
    <location>
        <begin position="690"/>
        <end position="717"/>
    </location>
</feature>
<feature type="compositionally biased region" description="Low complexity" evidence="3">
    <location>
        <begin position="482"/>
        <end position="496"/>
    </location>
</feature>
<feature type="compositionally biased region" description="Low complexity" evidence="3">
    <location>
        <begin position="527"/>
        <end position="538"/>
    </location>
</feature>
<feature type="compositionally biased region" description="Basic and acidic residues" evidence="3">
    <location>
        <begin position="597"/>
        <end position="608"/>
    </location>
</feature>
<feature type="modified residue" description="Phosphoserine" evidence="2">
    <location>
        <position position="467"/>
    </location>
</feature>
<feature type="modified residue" description="Phosphoserine" evidence="8 9">
    <location>
        <position position="510"/>
    </location>
</feature>
<feature type="modified residue" description="Phosphoserine" evidence="8">
    <location>
        <position position="523"/>
    </location>
</feature>
<feature type="modified residue" description="Phosphoserine" evidence="1">
    <location>
        <position position="529"/>
    </location>
</feature>
<feature type="modified residue" description="Phosphoserine" evidence="1">
    <location>
        <position position="533"/>
    </location>
</feature>
<feature type="modified residue" description="Phosphoserine" evidence="2">
    <location>
        <position position="863"/>
    </location>
</feature>
<feature type="modified residue" description="Phosphothreonine" evidence="1">
    <location>
        <position position="892"/>
    </location>
</feature>
<feature type="modified residue" description="Phosphoserine" evidence="9">
    <location>
        <position position="900"/>
    </location>
</feature>
<feature type="splice variant" id="VSP_021132" description="In isoform 3." evidence="5">
    <original>R</original>
    <variation>RGGPSREAGRREDIT</variation>
    <location>
        <position position="478"/>
    </location>
</feature>
<feature type="splice variant" id="VSP_021133" description="In isoform 3." evidence="5">
    <location>
        <begin position="545"/>
        <end position="742"/>
    </location>
</feature>
<feature type="splice variant" id="VSP_021134" description="In isoform 2." evidence="4">
    <location>
        <begin position="744"/>
        <end position="809"/>
    </location>
</feature>
<feature type="sequence conflict" description="In Ref. 3; AAH43717." evidence="6" ref="3">
    <original>R</original>
    <variation>W</variation>
    <location>
        <position position="57"/>
    </location>
</feature>
<feature type="sequence conflict" description="In Ref. 2; BAE33157 and 3; AAH43717." evidence="6" ref="2 3">
    <original>S</original>
    <variation>G</variation>
    <location>
        <position position="535"/>
    </location>
</feature>
<feature type="sequence conflict" description="In Ref. 2; BAE33157/BAE35311." evidence="6" ref="2">
    <original>T</original>
    <variation>S</variation>
    <location>
        <position position="626"/>
    </location>
</feature>
<feature type="sequence conflict" description="In Ref. 2; BAE35311." evidence="6" ref="2">
    <original>R</original>
    <variation>S</variation>
    <location>
        <position position="835"/>
    </location>
</feature>
<name>FHI1B_MOUSE</name>
<accession>Q3U2I3</accession>
<accession>Q3TWF5</accession>
<accession>Q6P543</accession>
<accession>Q80T93</accession>
<accession>Q811J6</accession>
<accession>Q8BI34</accession>
<accession>Q8VE55</accession>
<comment type="function">
    <text evidence="2">Component of the FTS/Hook/FHIP complex (FHF complex). The FHF complex may function to promote vesicle trafficking and/or fusion via the homotypic vesicular protein sorting complex (the HOPS complex). FHF complex promotes the distribution of AP-4 complex to the perinuclear area of the cell.</text>
</comment>
<comment type="subunit">
    <text evidence="2">Component of the FTS/Hook/FHIP complex (FHF complex), composed of AKTIP/FTS, FHIP1B, and one or more members of the Hook family of proteins HOOK1, HOOK2, and HOOK3. The FHF complex associates with the homotypic vesicular sorting complex (the HOPS complex).</text>
</comment>
<comment type="alternative products">
    <event type="alternative splicing"/>
    <isoform>
        <id>Q3U2I3-1</id>
        <name>1</name>
        <sequence type="displayed"/>
    </isoform>
    <isoform>
        <id>Q3U2I3-2</id>
        <name>2</name>
        <sequence type="described" ref="VSP_021134"/>
    </isoform>
    <isoform>
        <id>Q3U2I3-3</id>
        <name>3</name>
        <sequence type="described" ref="VSP_021132 VSP_021133"/>
    </isoform>
</comment>
<comment type="similarity">
    <text evidence="6">Belongs to the FHIP family.</text>
</comment>
<comment type="sequence caution" evidence="6">
    <conflict type="erroneous initiation">
        <sequence resource="EMBL-CDS" id="BAC65834"/>
    </conflict>
    <text>Extended N-terminus.</text>
</comment>